<keyword id="KW-0002">3D-structure</keyword>
<keyword id="KW-0007">Acetylation</keyword>
<keyword id="KW-0143">Chaperone</keyword>
<keyword id="KW-0963">Cytoplasm</keyword>
<keyword id="KW-1185">Reference proteome</keyword>
<keyword id="KW-0346">Stress response</keyword>
<dbReference type="EMBL" id="X58406">
    <property type="protein sequence ID" value="CAA41307.1"/>
    <property type="molecule type" value="Genomic_DNA"/>
</dbReference>
<dbReference type="EMBL" id="AL123456">
    <property type="protein sequence ID" value="CCP43081.1"/>
    <property type="molecule type" value="Genomic_DNA"/>
</dbReference>
<dbReference type="PIR" id="H70574">
    <property type="entry name" value="H70574"/>
</dbReference>
<dbReference type="RefSeq" id="NP_214865.1">
    <property type="nucleotide sequence ID" value="NC_000962.3"/>
</dbReference>
<dbReference type="RefSeq" id="WP_003401817.1">
    <property type="nucleotide sequence ID" value="NZ_NVQJ01000002.1"/>
</dbReference>
<dbReference type="PDB" id="8GB3">
    <property type="method" value="EM"/>
    <property type="resolution" value="3.70 A"/>
    <property type="chains" value="E/F=1-235"/>
</dbReference>
<dbReference type="PDBsum" id="8GB3"/>
<dbReference type="SMR" id="P9WMT5"/>
<dbReference type="FunCoup" id="P9WMT5">
    <property type="interactions" value="342"/>
</dbReference>
<dbReference type="STRING" id="83332.Rv0351"/>
<dbReference type="iPTMnet" id="P9WMT5"/>
<dbReference type="PaxDb" id="83332-Rv0351"/>
<dbReference type="DNASU" id="886497"/>
<dbReference type="GeneID" id="45424317"/>
<dbReference type="GeneID" id="886497"/>
<dbReference type="KEGG" id="mtu:Rv0351"/>
<dbReference type="KEGG" id="mtv:RVBD_0351"/>
<dbReference type="TubercuList" id="Rv0351"/>
<dbReference type="eggNOG" id="COG0576">
    <property type="taxonomic scope" value="Bacteria"/>
</dbReference>
<dbReference type="InParanoid" id="P9WMT5"/>
<dbReference type="OrthoDB" id="5191115at2"/>
<dbReference type="PhylomeDB" id="P9WMT5"/>
<dbReference type="Proteomes" id="UP000001584">
    <property type="component" value="Chromosome"/>
</dbReference>
<dbReference type="GO" id="GO:0005737">
    <property type="term" value="C:cytoplasm"/>
    <property type="evidence" value="ECO:0007669"/>
    <property type="project" value="UniProtKB-SubCell"/>
</dbReference>
<dbReference type="GO" id="GO:0009274">
    <property type="term" value="C:peptidoglycan-based cell wall"/>
    <property type="evidence" value="ECO:0007005"/>
    <property type="project" value="MTBBASE"/>
</dbReference>
<dbReference type="GO" id="GO:0000774">
    <property type="term" value="F:adenyl-nucleotide exchange factor activity"/>
    <property type="evidence" value="ECO:0000318"/>
    <property type="project" value="GO_Central"/>
</dbReference>
<dbReference type="GO" id="GO:0042803">
    <property type="term" value="F:protein homodimerization activity"/>
    <property type="evidence" value="ECO:0007669"/>
    <property type="project" value="InterPro"/>
</dbReference>
<dbReference type="GO" id="GO:0051087">
    <property type="term" value="F:protein-folding chaperone binding"/>
    <property type="evidence" value="ECO:0007669"/>
    <property type="project" value="InterPro"/>
</dbReference>
<dbReference type="GO" id="GO:0051082">
    <property type="term" value="F:unfolded protein binding"/>
    <property type="evidence" value="ECO:0000318"/>
    <property type="project" value="GO_Central"/>
</dbReference>
<dbReference type="GO" id="GO:0009267">
    <property type="term" value="P:cellular response to starvation"/>
    <property type="evidence" value="ECO:0000270"/>
    <property type="project" value="MTBBASE"/>
</dbReference>
<dbReference type="GO" id="GO:0006457">
    <property type="term" value="P:protein folding"/>
    <property type="evidence" value="ECO:0007669"/>
    <property type="project" value="InterPro"/>
</dbReference>
<dbReference type="CDD" id="cd00446">
    <property type="entry name" value="GrpE"/>
    <property type="match status" value="1"/>
</dbReference>
<dbReference type="FunFam" id="2.30.22.10:FF:000007">
    <property type="entry name" value="Protein GrpE"/>
    <property type="match status" value="1"/>
</dbReference>
<dbReference type="FunFam" id="3.90.20.20:FF:000010">
    <property type="entry name" value="Protein GrpE"/>
    <property type="match status" value="1"/>
</dbReference>
<dbReference type="Gene3D" id="3.90.20.20">
    <property type="match status" value="1"/>
</dbReference>
<dbReference type="Gene3D" id="2.30.22.10">
    <property type="entry name" value="Head domain of nucleotide exchange factor GrpE"/>
    <property type="match status" value="1"/>
</dbReference>
<dbReference type="HAMAP" id="MF_01151">
    <property type="entry name" value="GrpE"/>
    <property type="match status" value="1"/>
</dbReference>
<dbReference type="InterPro" id="IPR000740">
    <property type="entry name" value="GrpE"/>
</dbReference>
<dbReference type="InterPro" id="IPR013805">
    <property type="entry name" value="GrpE_coiled_coil"/>
</dbReference>
<dbReference type="InterPro" id="IPR009012">
    <property type="entry name" value="GrpE_head"/>
</dbReference>
<dbReference type="NCBIfam" id="NF010740">
    <property type="entry name" value="PRK14142.1"/>
    <property type="match status" value="1"/>
</dbReference>
<dbReference type="NCBIfam" id="NF010761">
    <property type="entry name" value="PRK14164.1"/>
    <property type="match status" value="1"/>
</dbReference>
<dbReference type="PANTHER" id="PTHR21237">
    <property type="entry name" value="GRPE PROTEIN"/>
    <property type="match status" value="1"/>
</dbReference>
<dbReference type="PANTHER" id="PTHR21237:SF23">
    <property type="entry name" value="GRPE PROTEIN HOMOLOG, MITOCHONDRIAL"/>
    <property type="match status" value="1"/>
</dbReference>
<dbReference type="Pfam" id="PF01025">
    <property type="entry name" value="GrpE"/>
    <property type="match status" value="1"/>
</dbReference>
<dbReference type="PRINTS" id="PR00773">
    <property type="entry name" value="GRPEPROTEIN"/>
</dbReference>
<dbReference type="SUPFAM" id="SSF58014">
    <property type="entry name" value="Coiled-coil domain of nucleotide exchange factor GrpE"/>
    <property type="match status" value="1"/>
</dbReference>
<dbReference type="SUPFAM" id="SSF51064">
    <property type="entry name" value="Head domain of nucleotide exchange factor GrpE"/>
    <property type="match status" value="1"/>
</dbReference>
<dbReference type="PROSITE" id="PS01071">
    <property type="entry name" value="GRPE"/>
    <property type="match status" value="1"/>
</dbReference>
<accession>P9WMT5</accession>
<accession>L0T3E5</accession>
<accession>O08379</accession>
<accession>P32724</accession>
<comment type="function">
    <text evidence="1">Participates actively in the response to hyperosmotic and heat shock by preventing the aggregation of stress-denatured proteins, in association with DnaK and GrpE. It is the nucleotide exchange factor for DnaK and may function as a thermosensor. Unfolded proteins bind initially to DnaJ; upon interaction with the DnaJ-bound protein, DnaK hydrolyzes its bound ATP, resulting in the formation of a stable complex. GrpE releases ADP from DnaK; ATP binding to DnaK triggers the release of the substrate protein, thus completing the reaction cycle. Several rounds of ATP-dependent interactions between DnaJ, DnaK and GrpE are required for fully efficient folding.</text>
</comment>
<comment type="subunit">
    <text evidence="1">Homodimer.</text>
</comment>
<comment type="subcellular location">
    <subcellularLocation>
        <location evidence="1">Cytoplasm</location>
    </subcellularLocation>
</comment>
<comment type="miscellaneous">
    <text>Was identified as a high-confidence drug target.</text>
</comment>
<comment type="similarity">
    <text evidence="1">Belongs to the GrpE family.</text>
</comment>
<reference key="1">
    <citation type="submission" date="1991-02" db="EMBL/GenBank/DDBJ databases">
        <authorList>
            <person name="Lathigra R."/>
            <person name="Alexander B."/>
            <person name="Stover C.K."/>
            <person name="Coadwell J."/>
            <person name="Young R.A."/>
            <person name="Young D.B."/>
        </authorList>
    </citation>
    <scope>NUCLEOTIDE SEQUENCE [GENOMIC DNA]</scope>
    <source>
        <strain>ATCC 35801 / TMC 107 / Erdman</strain>
    </source>
</reference>
<reference key="2">
    <citation type="journal article" date="1998" name="Nature">
        <title>Deciphering the biology of Mycobacterium tuberculosis from the complete genome sequence.</title>
        <authorList>
            <person name="Cole S.T."/>
            <person name="Brosch R."/>
            <person name="Parkhill J."/>
            <person name="Garnier T."/>
            <person name="Churcher C.M."/>
            <person name="Harris D.E."/>
            <person name="Gordon S.V."/>
            <person name="Eiglmeier K."/>
            <person name="Gas S."/>
            <person name="Barry C.E. III"/>
            <person name="Tekaia F."/>
            <person name="Badcock K."/>
            <person name="Basham D."/>
            <person name="Brown D."/>
            <person name="Chillingworth T."/>
            <person name="Connor R."/>
            <person name="Davies R.M."/>
            <person name="Devlin K."/>
            <person name="Feltwell T."/>
            <person name="Gentles S."/>
            <person name="Hamlin N."/>
            <person name="Holroyd S."/>
            <person name="Hornsby T."/>
            <person name="Jagels K."/>
            <person name="Krogh A."/>
            <person name="McLean J."/>
            <person name="Moule S."/>
            <person name="Murphy L.D."/>
            <person name="Oliver S."/>
            <person name="Osborne J."/>
            <person name="Quail M.A."/>
            <person name="Rajandream M.A."/>
            <person name="Rogers J."/>
            <person name="Rutter S."/>
            <person name="Seeger K."/>
            <person name="Skelton S."/>
            <person name="Squares S."/>
            <person name="Squares R."/>
            <person name="Sulston J.E."/>
            <person name="Taylor K."/>
            <person name="Whitehead S."/>
            <person name="Barrell B.G."/>
        </authorList>
    </citation>
    <scope>NUCLEOTIDE SEQUENCE [LARGE SCALE GENOMIC DNA]</scope>
    <source>
        <strain>ATCC 25618 / H37Rv</strain>
    </source>
</reference>
<reference key="3">
    <citation type="journal article" date="2008" name="BMC Syst. Biol.">
        <title>targetTB: a target identification pipeline for Mycobacterium tuberculosis through an interactome, reactome and genome-scale structural analysis.</title>
        <authorList>
            <person name="Raman K."/>
            <person name="Yeturu K."/>
            <person name="Chandra N."/>
        </authorList>
    </citation>
    <scope>IDENTIFICATION AS A DRUG TARGET [LARGE SCALE ANALYSIS]</scope>
</reference>
<reference key="4">
    <citation type="journal article" date="2011" name="Mol. Cell. Proteomics">
        <title>Proteogenomic analysis of Mycobacterium tuberculosis by high resolution mass spectrometry.</title>
        <authorList>
            <person name="Kelkar D.S."/>
            <person name="Kumar D."/>
            <person name="Kumar P."/>
            <person name="Balakrishnan L."/>
            <person name="Muthusamy B."/>
            <person name="Yadav A.K."/>
            <person name="Shrivastava P."/>
            <person name="Marimuthu A."/>
            <person name="Anand S."/>
            <person name="Sundaram H."/>
            <person name="Kingsbury R."/>
            <person name="Harsha H.C."/>
            <person name="Nair B."/>
            <person name="Prasad T.S."/>
            <person name="Chauhan D.S."/>
            <person name="Katoch K."/>
            <person name="Katoch V.M."/>
            <person name="Kumar P."/>
            <person name="Chaerkady R."/>
            <person name="Ramachandran S."/>
            <person name="Dash D."/>
            <person name="Pandey A."/>
        </authorList>
    </citation>
    <scope>ACETYLATION [LARGE SCALE ANALYSIS] AT THR-2</scope>
    <scope>CLEAVAGE OF INITIATOR METHIONINE [LARGE SCALE ANALYSIS]</scope>
    <scope>IDENTIFICATION BY MASS SPECTROMETRY [LARGE SCALE ANALYSIS]</scope>
    <source>
        <strain>ATCC 25618 / H37Rv</strain>
    </source>
</reference>
<sequence length="235" mass="24533">MTDGNQKPDGNSGEQVTVTDKRRIDPETGEVRHVPPGDMPGGTAAADAAHTEDKVAELTADLQRVQADFANYRKRALRDQQAAADRAKASVVSQLLGVLDDLERARKHGDLESGPLKSVADKLDSALTGLGLVAFGAEGEDFDPVLHEAVQHEGDGGQGSKPVIGTVMRQGYQLGEQVLRHALVGVVDTVVVDAAELESVDDGTAVADTAENDQADQGNSADTSGEQAESEPSGS</sequence>
<organism>
    <name type="scientific">Mycobacterium tuberculosis (strain ATCC 25618 / H37Rv)</name>
    <dbReference type="NCBI Taxonomy" id="83332"/>
    <lineage>
        <taxon>Bacteria</taxon>
        <taxon>Bacillati</taxon>
        <taxon>Actinomycetota</taxon>
        <taxon>Actinomycetes</taxon>
        <taxon>Mycobacteriales</taxon>
        <taxon>Mycobacteriaceae</taxon>
        <taxon>Mycobacterium</taxon>
        <taxon>Mycobacterium tuberculosis complex</taxon>
    </lineage>
</organism>
<proteinExistence type="evidence at protein level"/>
<gene>
    <name evidence="1" type="primary">grpE</name>
    <name type="ordered locus">Rv0351</name>
    <name type="ORF">MTCY13E10.11</name>
</gene>
<evidence type="ECO:0000255" key="1">
    <source>
        <dbReference type="HAMAP-Rule" id="MF_01151"/>
    </source>
</evidence>
<evidence type="ECO:0000256" key="2">
    <source>
        <dbReference type="SAM" id="MobiDB-lite"/>
    </source>
</evidence>
<evidence type="ECO:0000305" key="3"/>
<evidence type="ECO:0007744" key="4">
    <source>
    </source>
</evidence>
<name>GRPE_MYCTU</name>
<protein>
    <recommendedName>
        <fullName evidence="1">Protein GrpE</fullName>
    </recommendedName>
    <alternativeName>
        <fullName evidence="1">HSP-70 cofactor</fullName>
    </alternativeName>
</protein>
<feature type="initiator methionine" description="Removed" evidence="4">
    <location>
        <position position="1"/>
    </location>
</feature>
<feature type="chain" id="PRO_0000113824" description="Protein GrpE">
    <location>
        <begin position="2"/>
        <end position="235"/>
    </location>
</feature>
<feature type="region of interest" description="Disordered" evidence="2">
    <location>
        <begin position="1"/>
        <end position="50"/>
    </location>
</feature>
<feature type="region of interest" description="Disordered" evidence="2">
    <location>
        <begin position="198"/>
        <end position="235"/>
    </location>
</feature>
<feature type="compositionally biased region" description="Polar residues" evidence="2">
    <location>
        <begin position="1"/>
        <end position="18"/>
    </location>
</feature>
<feature type="compositionally biased region" description="Basic and acidic residues" evidence="2">
    <location>
        <begin position="19"/>
        <end position="35"/>
    </location>
</feature>
<feature type="compositionally biased region" description="Polar residues" evidence="2">
    <location>
        <begin position="215"/>
        <end position="235"/>
    </location>
</feature>
<feature type="modified residue" description="N-acetylthreonine" evidence="4">
    <location>
        <position position="2"/>
    </location>
</feature>
<feature type="sequence conflict" description="In Ref. 1; CAA41307." evidence="3" ref="1">
    <original>D</original>
    <variation>H</variation>
    <location>
        <position position="110"/>
    </location>
</feature>